<protein>
    <recommendedName>
        <fullName evidence="1">Small ribosomal subunit protein bS21</fullName>
    </recommendedName>
    <alternativeName>
        <fullName evidence="3">30S ribosomal protein S21</fullName>
    </alternativeName>
</protein>
<feature type="chain" id="PRO_0000266778" description="Small ribosomal subunit protein bS21">
    <location>
        <begin position="1"/>
        <end position="58"/>
    </location>
</feature>
<feature type="region of interest" description="Disordered" evidence="2">
    <location>
        <begin position="36"/>
        <end position="58"/>
    </location>
</feature>
<feature type="compositionally biased region" description="Basic residues" evidence="2">
    <location>
        <begin position="43"/>
        <end position="58"/>
    </location>
</feature>
<organism>
    <name type="scientific">Streptococcus pyogenes serotype M12 (strain MGAS9429)</name>
    <dbReference type="NCBI Taxonomy" id="370551"/>
    <lineage>
        <taxon>Bacteria</taxon>
        <taxon>Bacillati</taxon>
        <taxon>Bacillota</taxon>
        <taxon>Bacilli</taxon>
        <taxon>Lactobacillales</taxon>
        <taxon>Streptococcaceae</taxon>
        <taxon>Streptococcus</taxon>
    </lineage>
</organism>
<accession>Q1JMH3</accession>
<gene>
    <name evidence="1" type="primary">rpsU</name>
    <name type="ordered locus">MGAS9429_Spy0651</name>
</gene>
<comment type="similarity">
    <text evidence="1">Belongs to the bacterial ribosomal protein bS21 family.</text>
</comment>
<comment type="sequence caution" evidence="3">
    <conflict type="erroneous initiation">
        <sequence resource="EMBL-CDS" id="ABF31839"/>
    </conflict>
</comment>
<name>RS21_STRPC</name>
<keyword id="KW-0687">Ribonucleoprotein</keyword>
<keyword id="KW-0689">Ribosomal protein</keyword>
<evidence type="ECO:0000255" key="1">
    <source>
        <dbReference type="HAMAP-Rule" id="MF_00358"/>
    </source>
</evidence>
<evidence type="ECO:0000256" key="2">
    <source>
        <dbReference type="SAM" id="MobiDB-lite"/>
    </source>
</evidence>
<evidence type="ECO:0000305" key="3"/>
<reference key="1">
    <citation type="journal article" date="2006" name="Proc. Natl. Acad. Sci. U.S.A.">
        <title>Molecular genetic anatomy of inter- and intraserotype variation in the human bacterial pathogen group A Streptococcus.</title>
        <authorList>
            <person name="Beres S.B."/>
            <person name="Richter E.W."/>
            <person name="Nagiec M.J."/>
            <person name="Sumby P."/>
            <person name="Porcella S.F."/>
            <person name="DeLeo F.R."/>
            <person name="Musser J.M."/>
        </authorList>
    </citation>
    <scope>NUCLEOTIDE SEQUENCE [LARGE SCALE GENOMIC DNA]</scope>
    <source>
        <strain>MGAS9429</strain>
    </source>
</reference>
<sequence>MSKTVVRKNESLDDALRRFKRSVTKAGTLQESRKREFYEKPSVKRKRKSEAARKRKKF</sequence>
<dbReference type="EMBL" id="CP000259">
    <property type="protein sequence ID" value="ABF31839.1"/>
    <property type="status" value="ALT_INIT"/>
    <property type="molecule type" value="Genomic_DNA"/>
</dbReference>
<dbReference type="RefSeq" id="WP_000048058.1">
    <property type="nucleotide sequence ID" value="NC_008021.1"/>
</dbReference>
<dbReference type="SMR" id="Q1JMH3"/>
<dbReference type="GeneID" id="93936799"/>
<dbReference type="KEGG" id="spk:MGAS9429_Spy0651"/>
<dbReference type="HOGENOM" id="CLU_159258_3_2_9"/>
<dbReference type="Proteomes" id="UP000002433">
    <property type="component" value="Chromosome"/>
</dbReference>
<dbReference type="GO" id="GO:1990904">
    <property type="term" value="C:ribonucleoprotein complex"/>
    <property type="evidence" value="ECO:0007669"/>
    <property type="project" value="UniProtKB-KW"/>
</dbReference>
<dbReference type="GO" id="GO:0005840">
    <property type="term" value="C:ribosome"/>
    <property type="evidence" value="ECO:0007669"/>
    <property type="project" value="UniProtKB-KW"/>
</dbReference>
<dbReference type="GO" id="GO:0003735">
    <property type="term" value="F:structural constituent of ribosome"/>
    <property type="evidence" value="ECO:0007669"/>
    <property type="project" value="InterPro"/>
</dbReference>
<dbReference type="GO" id="GO:0006412">
    <property type="term" value="P:translation"/>
    <property type="evidence" value="ECO:0007669"/>
    <property type="project" value="UniProtKB-UniRule"/>
</dbReference>
<dbReference type="Gene3D" id="1.20.5.1150">
    <property type="entry name" value="Ribosomal protein S8"/>
    <property type="match status" value="1"/>
</dbReference>
<dbReference type="HAMAP" id="MF_00358">
    <property type="entry name" value="Ribosomal_bS21"/>
    <property type="match status" value="1"/>
</dbReference>
<dbReference type="InterPro" id="IPR001911">
    <property type="entry name" value="Ribosomal_bS21"/>
</dbReference>
<dbReference type="InterPro" id="IPR018278">
    <property type="entry name" value="Ribosomal_bS21_CS"/>
</dbReference>
<dbReference type="InterPro" id="IPR038380">
    <property type="entry name" value="Ribosomal_bS21_sf"/>
</dbReference>
<dbReference type="NCBIfam" id="TIGR00030">
    <property type="entry name" value="S21p"/>
    <property type="match status" value="1"/>
</dbReference>
<dbReference type="PANTHER" id="PTHR21109">
    <property type="entry name" value="MITOCHONDRIAL 28S RIBOSOMAL PROTEIN S21"/>
    <property type="match status" value="1"/>
</dbReference>
<dbReference type="PANTHER" id="PTHR21109:SF22">
    <property type="entry name" value="SMALL RIBOSOMAL SUBUNIT PROTEIN BS21"/>
    <property type="match status" value="1"/>
</dbReference>
<dbReference type="Pfam" id="PF01165">
    <property type="entry name" value="Ribosomal_S21"/>
    <property type="match status" value="1"/>
</dbReference>
<dbReference type="PRINTS" id="PR00976">
    <property type="entry name" value="RIBOSOMALS21"/>
</dbReference>
<dbReference type="PROSITE" id="PS01181">
    <property type="entry name" value="RIBOSOMAL_S21"/>
    <property type="match status" value="1"/>
</dbReference>
<proteinExistence type="inferred from homology"/>